<gene>
    <name type="primary">purC</name>
    <name type="ordered locus">AF_1272</name>
</gene>
<accession>O28996</accession>
<proteinExistence type="inferred from homology"/>
<sequence>MGSVKDLVVLKEPAEKPGLGRFIFSNRYSVFDYGEMPDKIEDKGRALCMVTAYFFEKLEEAGIATHYLGLVEGGKVRRFDEVENAVNEMEVKLVRVIKPKNGDYSIFKTLKGNFLVPLEIIYRNSIPEGSSLLRRIERGEAKPEDFGLTKIEAGMRLERPIVDFSTKLEDVDRYLSHSEAKEISGLSDEEFEALKELVVKVDEIITREVSKAGLINEDGKIEVALDDERNLMVVDAVGTPDECRFSFDGFEVSKELLREYYRKTEWYDKVRQLKGQEGWREAVGLPPPLPDEVREGVSNLYRAFCNEVTGRKFFDAPKLKEVVSQLKEVLE</sequence>
<protein>
    <recommendedName>
        <fullName>Putative phosphoribosylaminoimidazole-succinocarboxamide synthase</fullName>
        <ecNumber>6.3.2.6</ecNumber>
    </recommendedName>
    <alternativeName>
        <fullName>SAICAR synthetase</fullName>
    </alternativeName>
</protein>
<reference key="1">
    <citation type="journal article" date="1997" name="Nature">
        <title>The complete genome sequence of the hyperthermophilic, sulphate-reducing archaeon Archaeoglobus fulgidus.</title>
        <authorList>
            <person name="Klenk H.-P."/>
            <person name="Clayton R.A."/>
            <person name="Tomb J.-F."/>
            <person name="White O."/>
            <person name="Nelson K.E."/>
            <person name="Ketchum K.A."/>
            <person name="Dodson R.J."/>
            <person name="Gwinn M.L."/>
            <person name="Hickey E.K."/>
            <person name="Peterson J.D."/>
            <person name="Richardson D.L."/>
            <person name="Kerlavage A.R."/>
            <person name="Graham D.E."/>
            <person name="Kyrpides N.C."/>
            <person name="Fleischmann R.D."/>
            <person name="Quackenbush J."/>
            <person name="Lee N.H."/>
            <person name="Sutton G.G."/>
            <person name="Gill S.R."/>
            <person name="Kirkness E.F."/>
            <person name="Dougherty B.A."/>
            <person name="McKenney K."/>
            <person name="Adams M.D."/>
            <person name="Loftus B.J."/>
            <person name="Peterson S.N."/>
            <person name="Reich C.I."/>
            <person name="McNeil L.K."/>
            <person name="Badger J.H."/>
            <person name="Glodek A."/>
            <person name="Zhou L."/>
            <person name="Overbeek R."/>
            <person name="Gocayne J.D."/>
            <person name="Weidman J.F."/>
            <person name="McDonald L.A."/>
            <person name="Utterback T.R."/>
            <person name="Cotton M.D."/>
            <person name="Spriggs T."/>
            <person name="Artiach P."/>
            <person name="Kaine B.P."/>
            <person name="Sykes S.M."/>
            <person name="Sadow P.W."/>
            <person name="D'Andrea K.P."/>
            <person name="Bowman C."/>
            <person name="Fujii C."/>
            <person name="Garland S.A."/>
            <person name="Mason T.M."/>
            <person name="Olsen G.J."/>
            <person name="Fraser C.M."/>
            <person name="Smith H.O."/>
            <person name="Woese C.R."/>
            <person name="Venter J.C."/>
        </authorList>
    </citation>
    <scope>NUCLEOTIDE SEQUENCE [LARGE SCALE GENOMIC DNA]</scope>
    <source>
        <strain>ATCC 49558 / DSM 4304 / JCM 9628 / NBRC 100126 / VC-16</strain>
    </source>
</reference>
<dbReference type="EC" id="6.3.2.6"/>
<dbReference type="EMBL" id="AE000782">
    <property type="protein sequence ID" value="AAB89972.1"/>
    <property type="molecule type" value="Genomic_DNA"/>
</dbReference>
<dbReference type="PIR" id="G69408">
    <property type="entry name" value="G69408"/>
</dbReference>
<dbReference type="RefSeq" id="WP_010878767.1">
    <property type="nucleotide sequence ID" value="NC_000917.1"/>
</dbReference>
<dbReference type="SMR" id="O28996"/>
<dbReference type="STRING" id="224325.AF_1272"/>
<dbReference type="PaxDb" id="224325-AF_1272"/>
<dbReference type="EnsemblBacteria" id="AAB89972">
    <property type="protein sequence ID" value="AAB89972"/>
    <property type="gene ID" value="AF_1272"/>
</dbReference>
<dbReference type="GeneID" id="24794883"/>
<dbReference type="KEGG" id="afu:AF_1272"/>
<dbReference type="eggNOG" id="arCOG04421">
    <property type="taxonomic scope" value="Archaea"/>
</dbReference>
<dbReference type="HOGENOM" id="CLU_045637_1_0_2"/>
<dbReference type="OrthoDB" id="10775at2157"/>
<dbReference type="PhylomeDB" id="O28996"/>
<dbReference type="UniPathway" id="UPA00074">
    <property type="reaction ID" value="UER00131"/>
</dbReference>
<dbReference type="Proteomes" id="UP000002199">
    <property type="component" value="Chromosome"/>
</dbReference>
<dbReference type="GO" id="GO:0005737">
    <property type="term" value="C:cytoplasm"/>
    <property type="evidence" value="ECO:0007669"/>
    <property type="project" value="TreeGrafter"/>
</dbReference>
<dbReference type="GO" id="GO:0005524">
    <property type="term" value="F:ATP binding"/>
    <property type="evidence" value="ECO:0007669"/>
    <property type="project" value="UniProtKB-KW"/>
</dbReference>
<dbReference type="GO" id="GO:0004639">
    <property type="term" value="F:phosphoribosylaminoimidazolesuccinocarboxamide synthase activity"/>
    <property type="evidence" value="ECO:0007669"/>
    <property type="project" value="UniProtKB-UniRule"/>
</dbReference>
<dbReference type="GO" id="GO:0006189">
    <property type="term" value="P:'de novo' IMP biosynthetic process"/>
    <property type="evidence" value="ECO:0007669"/>
    <property type="project" value="UniProtKB-UniRule"/>
</dbReference>
<dbReference type="Gene3D" id="3.30.470.20">
    <property type="entry name" value="ATP-grasp fold, B domain"/>
    <property type="match status" value="1"/>
</dbReference>
<dbReference type="Gene3D" id="3.30.200.20">
    <property type="entry name" value="Phosphorylase Kinase, domain 1"/>
    <property type="match status" value="1"/>
</dbReference>
<dbReference type="HAMAP" id="MF_00137">
    <property type="entry name" value="SAICAR_synth"/>
    <property type="match status" value="1"/>
</dbReference>
<dbReference type="InterPro" id="IPR028923">
    <property type="entry name" value="SAICAR_synt/ADE2_N"/>
</dbReference>
<dbReference type="InterPro" id="IPR001636">
    <property type="entry name" value="SAICAR_synth"/>
</dbReference>
<dbReference type="NCBIfam" id="TIGR00081">
    <property type="entry name" value="purC"/>
    <property type="match status" value="1"/>
</dbReference>
<dbReference type="PANTHER" id="PTHR43700">
    <property type="entry name" value="PHOSPHORIBOSYLAMINOIMIDAZOLE-SUCCINOCARBOXAMIDE SYNTHASE"/>
    <property type="match status" value="1"/>
</dbReference>
<dbReference type="PANTHER" id="PTHR43700:SF1">
    <property type="entry name" value="PHOSPHORIBOSYLAMINOIMIDAZOLE-SUCCINOCARBOXAMIDE SYNTHASE"/>
    <property type="match status" value="1"/>
</dbReference>
<dbReference type="Pfam" id="PF01259">
    <property type="entry name" value="SAICAR_synt"/>
    <property type="match status" value="1"/>
</dbReference>
<dbReference type="SUPFAM" id="SSF56104">
    <property type="entry name" value="SAICAR synthase-like"/>
    <property type="match status" value="1"/>
</dbReference>
<organism>
    <name type="scientific">Archaeoglobus fulgidus (strain ATCC 49558 / DSM 4304 / JCM 9628 / NBRC 100126 / VC-16)</name>
    <dbReference type="NCBI Taxonomy" id="224325"/>
    <lineage>
        <taxon>Archaea</taxon>
        <taxon>Methanobacteriati</taxon>
        <taxon>Methanobacteriota</taxon>
        <taxon>Archaeoglobi</taxon>
        <taxon>Archaeoglobales</taxon>
        <taxon>Archaeoglobaceae</taxon>
        <taxon>Archaeoglobus</taxon>
    </lineage>
</organism>
<comment type="catalytic activity">
    <reaction>
        <text>5-amino-1-(5-phospho-D-ribosyl)imidazole-4-carboxylate + L-aspartate + ATP = (2S)-2-[5-amino-1-(5-phospho-beta-D-ribosyl)imidazole-4-carboxamido]succinate + ADP + phosphate + 2 H(+)</text>
        <dbReference type="Rhea" id="RHEA:22628"/>
        <dbReference type="ChEBI" id="CHEBI:15378"/>
        <dbReference type="ChEBI" id="CHEBI:29991"/>
        <dbReference type="ChEBI" id="CHEBI:30616"/>
        <dbReference type="ChEBI" id="CHEBI:43474"/>
        <dbReference type="ChEBI" id="CHEBI:58443"/>
        <dbReference type="ChEBI" id="CHEBI:77657"/>
        <dbReference type="ChEBI" id="CHEBI:456216"/>
        <dbReference type="EC" id="6.3.2.6"/>
    </reaction>
</comment>
<comment type="pathway">
    <text>Purine metabolism; IMP biosynthesis via de novo pathway; 5-amino-1-(5-phospho-D-ribosyl)imidazole-4-carboxamide from 5-amino-1-(5-phospho-D-ribosyl)imidazole-4-carboxylate: step 1/2.</text>
</comment>
<comment type="similarity">
    <text evidence="1">Belongs to the SAICAR synthetase family. Highly divergent.</text>
</comment>
<name>PUR7_ARCFU</name>
<evidence type="ECO:0000305" key="1"/>
<keyword id="KW-0067">ATP-binding</keyword>
<keyword id="KW-0436">Ligase</keyword>
<keyword id="KW-0547">Nucleotide-binding</keyword>
<keyword id="KW-0658">Purine biosynthesis</keyword>
<keyword id="KW-1185">Reference proteome</keyword>
<feature type="chain" id="PRO_0000100906" description="Putative phosphoribosylaminoimidazole-succinocarboxamide synthase">
    <location>
        <begin position="1"/>
        <end position="331"/>
    </location>
</feature>